<dbReference type="EC" id="1.14.-.-" evidence="1"/>
<dbReference type="EMBL" id="AM040265">
    <property type="protein sequence ID" value="CAJ12251.1"/>
    <property type="molecule type" value="Genomic_DNA"/>
</dbReference>
<dbReference type="SMR" id="Q2YIN9"/>
<dbReference type="STRING" id="359391.BAB2_0085"/>
<dbReference type="KEGG" id="bmf:BAB2_0085"/>
<dbReference type="HOGENOM" id="CLU_038878_0_0_5"/>
<dbReference type="Proteomes" id="UP000002719">
    <property type="component" value="Chromosome II"/>
</dbReference>
<dbReference type="GO" id="GO:0016705">
    <property type="term" value="F:oxidoreductase activity, acting on paired donors, with incorporation or reduction of molecular oxygen"/>
    <property type="evidence" value="ECO:0007669"/>
    <property type="project" value="UniProtKB-UniRule"/>
</dbReference>
<dbReference type="GO" id="GO:0006400">
    <property type="term" value="P:tRNA modification"/>
    <property type="evidence" value="ECO:0007669"/>
    <property type="project" value="UniProtKB-UniRule"/>
</dbReference>
<dbReference type="CDD" id="cd01518">
    <property type="entry name" value="RHOD_YceA"/>
    <property type="match status" value="1"/>
</dbReference>
<dbReference type="Gene3D" id="3.30.70.100">
    <property type="match status" value="1"/>
</dbReference>
<dbReference type="Gene3D" id="3.40.250.10">
    <property type="entry name" value="Rhodanese-like domain"/>
    <property type="match status" value="1"/>
</dbReference>
<dbReference type="HAMAP" id="MF_00469">
    <property type="entry name" value="TrhO"/>
    <property type="match status" value="1"/>
</dbReference>
<dbReference type="InterPro" id="IPR001763">
    <property type="entry name" value="Rhodanese-like_dom"/>
</dbReference>
<dbReference type="InterPro" id="IPR036873">
    <property type="entry name" value="Rhodanese-like_dom_sf"/>
</dbReference>
<dbReference type="InterPro" id="IPR020936">
    <property type="entry name" value="TrhO"/>
</dbReference>
<dbReference type="InterPro" id="IPR040503">
    <property type="entry name" value="TRHO_N"/>
</dbReference>
<dbReference type="NCBIfam" id="NF001136">
    <property type="entry name" value="PRK00142.1-4"/>
    <property type="match status" value="1"/>
</dbReference>
<dbReference type="PANTHER" id="PTHR43268:SF3">
    <property type="entry name" value="RHODANESE-LIKE DOMAIN-CONTAINING PROTEIN 7-RELATED"/>
    <property type="match status" value="1"/>
</dbReference>
<dbReference type="PANTHER" id="PTHR43268">
    <property type="entry name" value="THIOSULFATE SULFURTRANSFERASE/RHODANESE-LIKE DOMAIN-CONTAINING PROTEIN 2"/>
    <property type="match status" value="1"/>
</dbReference>
<dbReference type="Pfam" id="PF00581">
    <property type="entry name" value="Rhodanese"/>
    <property type="match status" value="1"/>
</dbReference>
<dbReference type="Pfam" id="PF17773">
    <property type="entry name" value="UPF0176_N"/>
    <property type="match status" value="1"/>
</dbReference>
<dbReference type="SMART" id="SM00450">
    <property type="entry name" value="RHOD"/>
    <property type="match status" value="1"/>
</dbReference>
<dbReference type="SUPFAM" id="SSF52821">
    <property type="entry name" value="Rhodanese/Cell cycle control phosphatase"/>
    <property type="match status" value="1"/>
</dbReference>
<dbReference type="PROSITE" id="PS50206">
    <property type="entry name" value="RHODANESE_3"/>
    <property type="match status" value="1"/>
</dbReference>
<evidence type="ECO:0000255" key="1">
    <source>
        <dbReference type="HAMAP-Rule" id="MF_00469"/>
    </source>
</evidence>
<proteinExistence type="inferred from homology"/>
<gene>
    <name evidence="1" type="primary">trhO</name>
    <name type="ordered locus">BAB2_0085</name>
</gene>
<accession>Q2YIN9</accession>
<keyword id="KW-0560">Oxidoreductase</keyword>
<keyword id="KW-1185">Reference proteome</keyword>
<keyword id="KW-0819">tRNA processing</keyword>
<reference key="1">
    <citation type="journal article" date="2005" name="Infect. Immun.">
        <title>Whole-genome analyses of speciation events in pathogenic Brucellae.</title>
        <authorList>
            <person name="Chain P.S."/>
            <person name="Comerci D.J."/>
            <person name="Tolmasky M.E."/>
            <person name="Larimer F.W."/>
            <person name="Malfatti S.A."/>
            <person name="Vergez L.M."/>
            <person name="Aguero F."/>
            <person name="Land M.L."/>
            <person name="Ugalde R.A."/>
            <person name="Garcia E."/>
        </authorList>
    </citation>
    <scope>NUCLEOTIDE SEQUENCE [LARGE SCALE GENOMIC DNA]</scope>
    <source>
        <strain>2308</strain>
    </source>
</reference>
<name>TRHO_BRUA2</name>
<comment type="function">
    <text evidence="1">Catalyzes oxygen-dependent 5-hydroxyuridine (ho5U) modification at position 34 in tRNAs.</text>
</comment>
<comment type="catalytic activity">
    <reaction evidence="1">
        <text>uridine(34) in tRNA + AH2 + O2 = 5-hydroxyuridine(34) in tRNA + A + H2O</text>
        <dbReference type="Rhea" id="RHEA:64224"/>
        <dbReference type="Rhea" id="RHEA-COMP:11727"/>
        <dbReference type="Rhea" id="RHEA-COMP:13381"/>
        <dbReference type="ChEBI" id="CHEBI:13193"/>
        <dbReference type="ChEBI" id="CHEBI:15377"/>
        <dbReference type="ChEBI" id="CHEBI:15379"/>
        <dbReference type="ChEBI" id="CHEBI:17499"/>
        <dbReference type="ChEBI" id="CHEBI:65315"/>
        <dbReference type="ChEBI" id="CHEBI:136877"/>
    </reaction>
</comment>
<comment type="similarity">
    <text evidence="1">Belongs to the TrhO family.</text>
</comment>
<feature type="chain" id="PRO_0000242912" description="tRNA uridine(34) hydroxylase">
    <location>
        <begin position="1"/>
        <end position="316"/>
    </location>
</feature>
<feature type="domain" description="Rhodanese" evidence="1">
    <location>
        <begin position="136"/>
        <end position="230"/>
    </location>
</feature>
<feature type="active site" description="Cysteine persulfide intermediate" evidence="1">
    <location>
        <position position="190"/>
    </location>
</feature>
<organism>
    <name type="scientific">Brucella abortus (strain 2308)</name>
    <dbReference type="NCBI Taxonomy" id="359391"/>
    <lineage>
        <taxon>Bacteria</taxon>
        <taxon>Pseudomonadati</taxon>
        <taxon>Pseudomonadota</taxon>
        <taxon>Alphaproteobacteria</taxon>
        <taxon>Hyphomicrobiales</taxon>
        <taxon>Brucellaceae</taxon>
        <taxon>Brucella/Ochrobactrum group</taxon>
        <taxon>Brucella</taxon>
    </lineage>
</organism>
<protein>
    <recommendedName>
        <fullName evidence="1">tRNA uridine(34) hydroxylase</fullName>
        <ecNumber evidence="1">1.14.-.-</ecNumber>
    </recommendedName>
    <alternativeName>
        <fullName evidence="1">tRNA hydroxylation protein O</fullName>
    </alternativeName>
</protein>
<sequence>MQGNFSKKIDPMSNLPFTVAALYCFAPLPQYESLREPLAQLCCANGIKGTLLLAAEGINGTVAGSAGAIEKLIAHITAIPGLGEPELKYSHASEMPFHRMKVRLKREIVTMGVEGIDPLKSVGTYIAPKDWNALIADENTVVVDKRNDYEYAIGTFEGAIDPQTRTFREFPEWVKQNRDRLEGKKIAMFCTGGIRCEKATAFVKGLGFDDVYHLKGGILKYLEEVPREQSMWNGECFVFDERVAVGHGLAESDVELCRACRRPLTPQDKLSQFFEEGVSCAGCYAERTPEDRARYAERQKQVKLAEKRGANKHIGS</sequence>